<dbReference type="EMBL" id="CP000872">
    <property type="protein sequence ID" value="ABX63013.1"/>
    <property type="molecule type" value="Genomic_DNA"/>
</dbReference>
<dbReference type="RefSeq" id="WP_004692102.1">
    <property type="nucleotide sequence ID" value="NC_010103.1"/>
</dbReference>
<dbReference type="GeneID" id="55591560"/>
<dbReference type="KEGG" id="bcs:BCAN_A2024"/>
<dbReference type="HOGENOM" id="CLU_106619_2_1_5"/>
<dbReference type="PhylomeDB" id="A9M966"/>
<dbReference type="Proteomes" id="UP000001385">
    <property type="component" value="Chromosome I"/>
</dbReference>
<dbReference type="CDD" id="cd18720">
    <property type="entry name" value="PIN_YqxD-like"/>
    <property type="match status" value="1"/>
</dbReference>
<dbReference type="HAMAP" id="MF_00489">
    <property type="entry name" value="UPF0178"/>
    <property type="match status" value="1"/>
</dbReference>
<dbReference type="InterPro" id="IPR003791">
    <property type="entry name" value="UPF0178"/>
</dbReference>
<dbReference type="NCBIfam" id="NF001095">
    <property type="entry name" value="PRK00124.1"/>
    <property type="match status" value="1"/>
</dbReference>
<dbReference type="PANTHER" id="PTHR35146">
    <property type="entry name" value="UPF0178 PROTEIN YAII"/>
    <property type="match status" value="1"/>
</dbReference>
<dbReference type="PANTHER" id="PTHR35146:SF1">
    <property type="entry name" value="UPF0178 PROTEIN YAII"/>
    <property type="match status" value="1"/>
</dbReference>
<dbReference type="Pfam" id="PF02639">
    <property type="entry name" value="DUF188"/>
    <property type="match status" value="1"/>
</dbReference>
<feature type="chain" id="PRO_1000081373" description="UPF0178 protein BCAN_A2024">
    <location>
        <begin position="1"/>
        <end position="161"/>
    </location>
</feature>
<protein>
    <recommendedName>
        <fullName evidence="1">UPF0178 protein BCAN_A2024</fullName>
    </recommendedName>
</protein>
<comment type="similarity">
    <text evidence="1">Belongs to the UPF0178 family.</text>
</comment>
<accession>A9M966</accession>
<organism>
    <name type="scientific">Brucella canis (strain ATCC 23365 / NCTC 10854 / RM-666)</name>
    <dbReference type="NCBI Taxonomy" id="483179"/>
    <lineage>
        <taxon>Bacteria</taxon>
        <taxon>Pseudomonadati</taxon>
        <taxon>Pseudomonadota</taxon>
        <taxon>Alphaproteobacteria</taxon>
        <taxon>Hyphomicrobiales</taxon>
        <taxon>Brucellaceae</taxon>
        <taxon>Brucella/Ochrobactrum group</taxon>
        <taxon>Brucella</taxon>
    </lineage>
</organism>
<evidence type="ECO:0000255" key="1">
    <source>
        <dbReference type="HAMAP-Rule" id="MF_00489"/>
    </source>
</evidence>
<keyword id="KW-1185">Reference proteome</keyword>
<name>Y2024_BRUC2</name>
<gene>
    <name type="ordered locus">BCAN_A2024</name>
</gene>
<proteinExistence type="inferred from homology"/>
<reference key="1">
    <citation type="submission" date="2007-10" db="EMBL/GenBank/DDBJ databases">
        <title>Brucella canis ATCC 23365 whole genome shotgun sequencing project.</title>
        <authorList>
            <person name="Setubal J.C."/>
            <person name="Bowns C."/>
            <person name="Boyle S."/>
            <person name="Crasta O.R."/>
            <person name="Czar M.J."/>
            <person name="Dharmanolla C."/>
            <person name="Gillespie J.J."/>
            <person name="Kenyon R.W."/>
            <person name="Lu J."/>
            <person name="Mane S."/>
            <person name="Mohapatra S."/>
            <person name="Nagrani S."/>
            <person name="Purkayastha A."/>
            <person name="Rajasimha H.K."/>
            <person name="Shallom J.M."/>
            <person name="Shallom S."/>
            <person name="Shukla M."/>
            <person name="Snyder E.E."/>
            <person name="Sobral B.W."/>
            <person name="Wattam A.R."/>
            <person name="Will R."/>
            <person name="Williams K."/>
            <person name="Yoo H."/>
            <person name="Bruce D."/>
            <person name="Detter C."/>
            <person name="Munk C."/>
            <person name="Brettin T.S."/>
        </authorList>
    </citation>
    <scope>NUCLEOTIDE SEQUENCE [LARGE SCALE GENOMIC DNA]</scope>
    <source>
        <strain>ATCC 23365 / NCTC 10854 / RM-666</strain>
    </source>
</reference>
<sequence length="161" mass="17095">MENEPDTICILVDADACPVKAEIYRVAERHNLPVVIVANSFIAIPREAQRVERVVVSGNLDAADDWIAEHSRPGAVVVTADIPLASRALEKGASVIAPNGRIHTQSTIGNTLATRNLIDSLRSAGEVTGGPAPFAPKDRSAFLSALDLAIVRLKRAGFHAS</sequence>